<keyword id="KW-0025">Alternative splicing</keyword>
<keyword id="KW-0539">Nucleus</keyword>
<keyword id="KW-1185">Reference proteome</keyword>
<dbReference type="EMBL" id="AL162691">
    <property type="protein sequence ID" value="CAB83157.1"/>
    <property type="molecule type" value="Genomic_DNA"/>
</dbReference>
<dbReference type="EMBL" id="CP002686">
    <property type="protein sequence ID" value="AEE77835.1"/>
    <property type="molecule type" value="Genomic_DNA"/>
</dbReference>
<dbReference type="EMBL" id="CP002686">
    <property type="protein sequence ID" value="ANM64670.1"/>
    <property type="molecule type" value="Genomic_DNA"/>
</dbReference>
<dbReference type="PIR" id="T47421">
    <property type="entry name" value="T47421"/>
</dbReference>
<dbReference type="RefSeq" id="NP_001326682.1">
    <molecule id="A0A1I9LQ12-1"/>
    <property type="nucleotide sequence ID" value="NM_001339112.1"/>
</dbReference>
<dbReference type="RefSeq" id="NP_189971.1">
    <molecule id="A0A1I9LQ12-2"/>
    <property type="nucleotide sequence ID" value="NM_114253.1"/>
</dbReference>
<dbReference type="IntAct" id="A0A1I9LQ12">
    <property type="interactions" value="1"/>
</dbReference>
<dbReference type="STRING" id="3702.Q9LZG3"/>
<dbReference type="PaxDb" id="3702-AT3G43850.1"/>
<dbReference type="EnsemblPlants" id="AT3G43850.1">
    <molecule id="A0A1I9LQ12-2"/>
    <property type="protein sequence ID" value="AT3G43850.1"/>
    <property type="gene ID" value="AT3G43850"/>
</dbReference>
<dbReference type="EnsemblPlants" id="AT3G43850.2">
    <molecule id="A0A1I9LQ12-1"/>
    <property type="protein sequence ID" value="AT3G43850.2"/>
    <property type="gene ID" value="AT3G43850"/>
</dbReference>
<dbReference type="GeneID" id="823498"/>
<dbReference type="Gramene" id="AT3G43850.1">
    <molecule id="A0A1I9LQ12-2"/>
    <property type="protein sequence ID" value="AT3G43850.1"/>
    <property type="gene ID" value="AT3G43850"/>
</dbReference>
<dbReference type="Gramene" id="AT3G43850.2">
    <molecule id="A0A1I9LQ12-1"/>
    <property type="protein sequence ID" value="AT3G43850.2"/>
    <property type="gene ID" value="AT3G43850"/>
</dbReference>
<dbReference type="KEGG" id="ath:AT3G43850"/>
<dbReference type="Araport" id="AT3G43850"/>
<dbReference type="TAIR" id="AT3G43850"/>
<dbReference type="eggNOG" id="KOG4210">
    <property type="taxonomic scope" value="Eukaryota"/>
</dbReference>
<dbReference type="HOGENOM" id="CLU_090130_0_0_1"/>
<dbReference type="InParanoid" id="A0A1I9LQ12"/>
<dbReference type="OMA" id="ESAYKGP"/>
<dbReference type="PRO" id="PR:A0A1I9LQ12"/>
<dbReference type="Proteomes" id="UP000006548">
    <property type="component" value="Chromosome 3"/>
</dbReference>
<dbReference type="ExpressionAtlas" id="A0A1I9LQ12">
    <property type="expression patterns" value="baseline and differential"/>
</dbReference>
<dbReference type="GO" id="GO:0005634">
    <property type="term" value="C:nucleus"/>
    <property type="evidence" value="ECO:0007669"/>
    <property type="project" value="UniProtKB-SubCell"/>
</dbReference>
<dbReference type="GO" id="GO:0000325">
    <property type="term" value="C:plant-type vacuole"/>
    <property type="evidence" value="ECO:0007005"/>
    <property type="project" value="TAIR"/>
</dbReference>
<dbReference type="GO" id="GO:0006979">
    <property type="term" value="P:response to oxidative stress"/>
    <property type="evidence" value="ECO:0007669"/>
    <property type="project" value="UniProtKB-ARBA"/>
</dbReference>
<dbReference type="InterPro" id="IPR051992">
    <property type="entry name" value="OxStress_Response_Reg"/>
</dbReference>
<dbReference type="PANTHER" id="PTHR33172">
    <property type="entry name" value="OS08G0516900 PROTEIN"/>
    <property type="match status" value="1"/>
</dbReference>
<dbReference type="PANTHER" id="PTHR33172:SF107">
    <property type="entry name" value="PROTEIN OXIDATIVE STRESS 3 LIKE 2"/>
    <property type="match status" value="1"/>
</dbReference>
<feature type="chain" id="PRO_0000455033" description="Protein OXIDATIVE STRESS 3 LIKE 2">
    <location>
        <begin position="1"/>
        <end position="189"/>
    </location>
</feature>
<feature type="region of interest" description="Disordered" evidence="2">
    <location>
        <begin position="22"/>
        <end position="49"/>
    </location>
</feature>
<feature type="region of interest" description="Disordered" evidence="2">
    <location>
        <begin position="128"/>
        <end position="147"/>
    </location>
</feature>
<feature type="compositionally biased region" description="Acidic residues" evidence="2">
    <location>
        <begin position="33"/>
        <end position="44"/>
    </location>
</feature>
<feature type="splice variant" id="VSP_061446" description="In isoform 2.">
    <original>GNCVPVVDSPRCFQTAAGRNIHNIIC</original>
    <variation>EAFTFQDKSETDEDHKKATKGATKPVNQTWSSSGHSIKTRQWPRSTIAEARRAGESMASIDKLMAENFLDNVNLDPISIKKSRDPCVPKSSCCLFLNTSLYFLGRTD</variation>
    <location>
        <begin position="164"/>
        <end position="189"/>
    </location>
</feature>
<reference key="1">
    <citation type="journal article" date="2000" name="Nature">
        <title>Sequence and analysis of chromosome 3 of the plant Arabidopsis thaliana.</title>
        <authorList>
            <person name="Salanoubat M."/>
            <person name="Lemcke K."/>
            <person name="Rieger M."/>
            <person name="Ansorge W."/>
            <person name="Unseld M."/>
            <person name="Fartmann B."/>
            <person name="Valle G."/>
            <person name="Bloecker H."/>
            <person name="Perez-Alonso M."/>
            <person name="Obermaier B."/>
            <person name="Delseny M."/>
            <person name="Boutry M."/>
            <person name="Grivell L.A."/>
            <person name="Mache R."/>
            <person name="Puigdomenech P."/>
            <person name="De Simone V."/>
            <person name="Choisne N."/>
            <person name="Artiguenave F."/>
            <person name="Robert C."/>
            <person name="Brottier P."/>
            <person name="Wincker P."/>
            <person name="Cattolico L."/>
            <person name="Weissenbach J."/>
            <person name="Saurin W."/>
            <person name="Quetier F."/>
            <person name="Schaefer M."/>
            <person name="Mueller-Auer S."/>
            <person name="Gabel C."/>
            <person name="Fuchs M."/>
            <person name="Benes V."/>
            <person name="Wurmbach E."/>
            <person name="Drzonek H."/>
            <person name="Erfle H."/>
            <person name="Jordan N."/>
            <person name="Bangert S."/>
            <person name="Wiedelmann R."/>
            <person name="Kranz H."/>
            <person name="Voss H."/>
            <person name="Holland R."/>
            <person name="Brandt P."/>
            <person name="Nyakatura G."/>
            <person name="Vezzi A."/>
            <person name="D'Angelo M."/>
            <person name="Pallavicini A."/>
            <person name="Toppo S."/>
            <person name="Simionati B."/>
            <person name="Conrad A."/>
            <person name="Hornischer K."/>
            <person name="Kauer G."/>
            <person name="Loehnert T.-H."/>
            <person name="Nordsiek G."/>
            <person name="Reichelt J."/>
            <person name="Scharfe M."/>
            <person name="Schoen O."/>
            <person name="Bargues M."/>
            <person name="Terol J."/>
            <person name="Climent J."/>
            <person name="Navarro P."/>
            <person name="Collado C."/>
            <person name="Perez-Perez A."/>
            <person name="Ottenwaelder B."/>
            <person name="Duchemin D."/>
            <person name="Cooke R."/>
            <person name="Laudie M."/>
            <person name="Berger-Llauro C."/>
            <person name="Purnelle B."/>
            <person name="Masuy D."/>
            <person name="de Haan M."/>
            <person name="Maarse A.C."/>
            <person name="Alcaraz J.-P."/>
            <person name="Cottet A."/>
            <person name="Casacuberta E."/>
            <person name="Monfort A."/>
            <person name="Argiriou A."/>
            <person name="Flores M."/>
            <person name="Liguori R."/>
            <person name="Vitale D."/>
            <person name="Mannhaupt G."/>
            <person name="Haase D."/>
            <person name="Schoof H."/>
            <person name="Rudd S."/>
            <person name="Zaccaria P."/>
            <person name="Mewes H.-W."/>
            <person name="Mayer K.F.X."/>
            <person name="Kaul S."/>
            <person name="Town C.D."/>
            <person name="Koo H.L."/>
            <person name="Tallon L.J."/>
            <person name="Jenkins J."/>
            <person name="Rooney T."/>
            <person name="Rizzo M."/>
            <person name="Walts A."/>
            <person name="Utterback T."/>
            <person name="Fujii C.Y."/>
            <person name="Shea T.P."/>
            <person name="Creasy T.H."/>
            <person name="Haas B."/>
            <person name="Maiti R."/>
            <person name="Wu D."/>
            <person name="Peterson J."/>
            <person name="Van Aken S."/>
            <person name="Pai G."/>
            <person name="Militscher J."/>
            <person name="Sellers P."/>
            <person name="Gill J.E."/>
            <person name="Feldblyum T.V."/>
            <person name="Preuss D."/>
            <person name="Lin X."/>
            <person name="Nierman W.C."/>
            <person name="Salzberg S.L."/>
            <person name="White O."/>
            <person name="Venter J.C."/>
            <person name="Fraser C.M."/>
            <person name="Kaneko T."/>
            <person name="Nakamura Y."/>
            <person name="Sato S."/>
            <person name="Kato T."/>
            <person name="Asamizu E."/>
            <person name="Sasamoto S."/>
            <person name="Kimura T."/>
            <person name="Idesawa K."/>
            <person name="Kawashima K."/>
            <person name="Kishida Y."/>
            <person name="Kiyokawa C."/>
            <person name="Kohara M."/>
            <person name="Matsumoto M."/>
            <person name="Matsuno A."/>
            <person name="Muraki A."/>
            <person name="Nakayama S."/>
            <person name="Nakazaki N."/>
            <person name="Shinpo S."/>
            <person name="Takeuchi C."/>
            <person name="Wada T."/>
            <person name="Watanabe A."/>
            <person name="Yamada M."/>
            <person name="Yasuda M."/>
            <person name="Tabata S."/>
        </authorList>
    </citation>
    <scope>NUCLEOTIDE SEQUENCE [LARGE SCALE GENOMIC DNA] (ISOFORM 2)</scope>
    <source>
        <strain>cv. Columbia</strain>
    </source>
</reference>
<reference key="2">
    <citation type="journal article" date="2017" name="Plant J.">
        <title>Araport11: a complete reannotation of the Arabidopsis thaliana reference genome.</title>
        <authorList>
            <person name="Cheng C.Y."/>
            <person name="Krishnakumar V."/>
            <person name="Chan A.P."/>
            <person name="Thibaud-Nissen F."/>
            <person name="Schobel S."/>
            <person name="Town C.D."/>
        </authorList>
    </citation>
    <scope>GENOME REANNOTATION</scope>
    <source>
        <strain>cv. Columbia</strain>
    </source>
</reference>
<reference key="3">
    <citation type="journal article" date="2009" name="Plant J.">
        <title>OXIDATIVE STRESS 3 is a chromatin-associated factor involved in tolerance to heavy metals and oxidative stress.</title>
        <authorList>
            <person name="Blanvillain R."/>
            <person name="Kim J.H."/>
            <person name="Wu S."/>
            <person name="Lima A."/>
            <person name="Ow D.W."/>
        </authorList>
    </citation>
    <scope>GENE FAMILY</scope>
    <scope>NOMENCLATURE</scope>
    <source>
        <strain>cv. Landsberg erecta</strain>
        <strain>cv. Wassilewskija</strain>
    </source>
</reference>
<accession>A0A1I9LQ12</accession>
<accession>Q9LZG3</accession>
<comment type="subcellular location">
    <subcellularLocation>
        <location evidence="1">Nucleus</location>
    </subcellularLocation>
</comment>
<comment type="alternative products">
    <event type="alternative splicing"/>
    <isoform>
        <id>A0A1I9LQ12-1</id>
        <name>1</name>
        <sequence type="displayed"/>
    </isoform>
    <isoform>
        <id>A0A1I9LQ12-2</id>
        <name>2</name>
        <sequence type="described" ref="VSP_061446"/>
    </isoform>
</comment>
<name>O3L2_ARATH</name>
<evidence type="ECO:0000250" key="1">
    <source>
        <dbReference type="UniProtKB" id="Q9LVB9"/>
    </source>
</evidence>
<evidence type="ECO:0000256" key="2">
    <source>
        <dbReference type="SAM" id="MobiDB-lite"/>
    </source>
</evidence>
<evidence type="ECO:0000303" key="3">
    <source>
    </source>
</evidence>
<evidence type="ECO:0000312" key="4">
    <source>
        <dbReference type="Araport" id="AT3G43850"/>
    </source>
</evidence>
<evidence type="ECO:0000312" key="5">
    <source>
        <dbReference type="EMBL" id="CAB83157.1"/>
    </source>
</evidence>
<gene>
    <name evidence="3" type="primary">O3L2</name>
    <name evidence="4" type="ordered locus">At3g43850</name>
    <name evidence="5" type="ORF">T28A8_140</name>
</gene>
<protein>
    <recommendedName>
        <fullName evidence="3">Protein OXIDATIVE STRESS 3 LIKE 2</fullName>
        <shortName evidence="3">AtO3L2</shortName>
    </recommendedName>
</protein>
<sequence length="189" mass="20946">MFTAIDKIDRTFTVDQEFACLSSSTSSDSIGENSDDDEGGENEIESSYNGPLDMMESLEEALPIKRAISKFYKGKSKSFMSLSETSSLPVKDLTKPENLYSRRRRNLLSHRICSRGGISKKPFKSVLAMSQREGDSSSSGDDSLPTLRQHHKTLTPRLRKGSFGNCVPVVDSPRCFQTAAGRNIHNIIC</sequence>
<proteinExistence type="inferred from homology"/>
<organism>
    <name type="scientific">Arabidopsis thaliana</name>
    <name type="common">Mouse-ear cress</name>
    <dbReference type="NCBI Taxonomy" id="3702"/>
    <lineage>
        <taxon>Eukaryota</taxon>
        <taxon>Viridiplantae</taxon>
        <taxon>Streptophyta</taxon>
        <taxon>Embryophyta</taxon>
        <taxon>Tracheophyta</taxon>
        <taxon>Spermatophyta</taxon>
        <taxon>Magnoliopsida</taxon>
        <taxon>eudicotyledons</taxon>
        <taxon>Gunneridae</taxon>
        <taxon>Pentapetalae</taxon>
        <taxon>rosids</taxon>
        <taxon>malvids</taxon>
        <taxon>Brassicales</taxon>
        <taxon>Brassicaceae</taxon>
        <taxon>Camelineae</taxon>
        <taxon>Arabidopsis</taxon>
    </lineage>
</organism>